<sequence length="43" mass="4598">KNYGNGVHCTKKGCSVDWGYAWTNIANNSVMNGLTGGNAGWHN</sequence>
<proteinExistence type="evidence at protein level"/>
<accession>P81053</accession>
<organism>
    <name type="scientific">Leuconostoc mesenteroides</name>
    <dbReference type="NCBI Taxonomy" id="1245"/>
    <lineage>
        <taxon>Bacteria</taxon>
        <taxon>Bacillati</taxon>
        <taxon>Bacillota</taxon>
        <taxon>Bacilli</taxon>
        <taxon>Lactobacillales</taxon>
        <taxon>Lactobacillaceae</taxon>
        <taxon>Leuconostoc</taxon>
    </lineage>
</organism>
<name>LCCC_LEUME</name>
<reference key="1">
    <citation type="journal article" date="2002" name="Biochem. Biophys. Res. Commun.">
        <title>The complete amino acid sequence of the pediocin-like antimicrobial peptide leucocin C.</title>
        <authorList>
            <person name="Fimland G."/>
            <person name="Sletten K."/>
            <person name="Nissen-Meyer J."/>
        </authorList>
    </citation>
    <scope>PROTEIN SEQUENCE</scope>
    <scope>MASS SPECTROMETRY</scope>
</reference>
<reference key="2">
    <citation type="journal article" date="1998" name="Microbiology">
        <title>Sequence and structural relationships of leucocins A-, B- and C-TA33a from Leuconostoc mesenteroides TA33a.</title>
        <authorList>
            <person name="Papathanasopoulos M.A."/>
            <person name="Dykes G.A."/>
            <person name="Revol-Junelles A.-M."/>
            <person name="Delfour A."/>
            <person name="von Holy A."/>
            <person name="Hastings J.W."/>
        </authorList>
    </citation>
    <scope>PROTEIN SEQUENCE OF 1-36</scope>
    <source>
        <strain>TA33a</strain>
    </source>
</reference>
<keyword id="KW-0044">Antibiotic</keyword>
<keyword id="KW-0929">Antimicrobial</keyword>
<keyword id="KW-0078">Bacteriocin</keyword>
<keyword id="KW-0903">Direct protein sequencing</keyword>
<keyword id="KW-1015">Disulfide bond</keyword>
<keyword id="KW-0964">Secreted</keyword>
<dbReference type="SMR" id="P81053"/>
<dbReference type="GO" id="GO:0005576">
    <property type="term" value="C:extracellular region"/>
    <property type="evidence" value="ECO:0007669"/>
    <property type="project" value="UniProtKB-SubCell"/>
</dbReference>
<dbReference type="GO" id="GO:0042742">
    <property type="term" value="P:defense response to bacterium"/>
    <property type="evidence" value="ECO:0007669"/>
    <property type="project" value="UniProtKB-KW"/>
</dbReference>
<dbReference type="GO" id="GO:0031640">
    <property type="term" value="P:killing of cells of another organism"/>
    <property type="evidence" value="ECO:0007669"/>
    <property type="project" value="UniProtKB-KW"/>
</dbReference>
<dbReference type="Gene3D" id="1.20.5.130">
    <property type="match status" value="1"/>
</dbReference>
<dbReference type="InterPro" id="IPR002633">
    <property type="entry name" value="Bacteriocin_IIa"/>
</dbReference>
<dbReference type="InterPro" id="IPR023384">
    <property type="entry name" value="Bacteriocin_IIa_CS"/>
</dbReference>
<dbReference type="InterPro" id="IPR023388">
    <property type="entry name" value="Bacteriocin_IIa_dom_sf"/>
</dbReference>
<dbReference type="Pfam" id="PF01721">
    <property type="entry name" value="Bacteriocin_II"/>
    <property type="match status" value="1"/>
</dbReference>
<dbReference type="PROSITE" id="PS60030">
    <property type="entry name" value="BACTERIOCIN_IIA"/>
    <property type="match status" value="1"/>
</dbReference>
<feature type="chain" id="PRO_0000110575" description="Bacteriocin leucocin-C">
    <location>
        <begin position="1"/>
        <end position="43"/>
    </location>
</feature>
<feature type="disulfide bond" evidence="1">
    <location>
        <begin position="9"/>
        <end position="14"/>
    </location>
</feature>
<feature type="sequence conflict" description="In Ref. 2; AA sequence." evidence="3" ref="2">
    <original>W</original>
    <variation>A</variation>
    <location>
        <position position="22"/>
    </location>
</feature>
<evidence type="ECO:0000250" key="1"/>
<evidence type="ECO:0000269" key="2">
    <source>
    </source>
</evidence>
<evidence type="ECO:0000305" key="3"/>
<protein>
    <recommendedName>
        <fullName>Bacteriocin leucocin-C</fullName>
    </recommendedName>
</protein>
<comment type="function">
    <text>Inhibits a wide spectrum of lactic acid bacteria.</text>
</comment>
<comment type="subcellular location">
    <subcellularLocation>
        <location>Secreted</location>
    </subcellularLocation>
</comment>
<comment type="mass spectrometry" mass="4595.0" method="MALDI" evidence="2"/>
<comment type="similarity">
    <text evidence="3">Belongs to the bacteriocin class IIA/YGNGV family.</text>
</comment>